<comment type="function">
    <text evidence="1">Part of a sulfur-relay system required for 2-thiolation of 5-methylaminomethyl-2-thiouridine (mnm(5)s(2)U) at tRNA wobble positions.</text>
</comment>
<comment type="subunit">
    <text evidence="1">Heterohexamer, formed by a dimer of trimers. The hexameric TusBCD complex contains 2 copies each of TusB, TusC and TusD. The TusBCD complex interacts with TusE.</text>
</comment>
<comment type="subcellular location">
    <subcellularLocation>
        <location evidence="1">Cytoplasm</location>
    </subcellularLocation>
</comment>
<comment type="similarity">
    <text evidence="1">Belongs to the DsrF/TusC family.</text>
</comment>
<dbReference type="EMBL" id="CP000950">
    <property type="protein sequence ID" value="ACA66586.1"/>
    <property type="molecule type" value="Genomic_DNA"/>
</dbReference>
<dbReference type="RefSeq" id="WP_002212321.1">
    <property type="nucleotide sequence ID" value="NZ_CP009792.1"/>
</dbReference>
<dbReference type="SMR" id="B1JIV1"/>
<dbReference type="GeneID" id="57974405"/>
<dbReference type="KEGG" id="ypy:YPK_0273"/>
<dbReference type="PATRIC" id="fig|502800.11.peg.879"/>
<dbReference type="GO" id="GO:0005737">
    <property type="term" value="C:cytoplasm"/>
    <property type="evidence" value="ECO:0007669"/>
    <property type="project" value="UniProtKB-SubCell"/>
</dbReference>
<dbReference type="GO" id="GO:0008033">
    <property type="term" value="P:tRNA processing"/>
    <property type="evidence" value="ECO:0007669"/>
    <property type="project" value="UniProtKB-UniRule"/>
</dbReference>
<dbReference type="Gene3D" id="3.40.1260.10">
    <property type="entry name" value="DsrEFH-like"/>
    <property type="match status" value="1"/>
</dbReference>
<dbReference type="HAMAP" id="MF_00389">
    <property type="entry name" value="Thiourid_synth_C"/>
    <property type="match status" value="1"/>
</dbReference>
<dbReference type="InterPro" id="IPR027396">
    <property type="entry name" value="DsrEFH-like"/>
</dbReference>
<dbReference type="InterPro" id="IPR003787">
    <property type="entry name" value="Sulphur_relay_DsrE/F-like"/>
</dbReference>
<dbReference type="InterPro" id="IPR037450">
    <property type="entry name" value="Sulphur_relay_TusC"/>
</dbReference>
<dbReference type="InterPro" id="IPR017462">
    <property type="entry name" value="Sulphur_relay_TusC/DsrF"/>
</dbReference>
<dbReference type="NCBIfam" id="NF001238">
    <property type="entry name" value="PRK00211.1"/>
    <property type="match status" value="1"/>
</dbReference>
<dbReference type="NCBIfam" id="TIGR03010">
    <property type="entry name" value="sulf_tusC_dsrF"/>
    <property type="match status" value="1"/>
</dbReference>
<dbReference type="PANTHER" id="PTHR38780">
    <property type="entry name" value="PROTEIN TUSC"/>
    <property type="match status" value="1"/>
</dbReference>
<dbReference type="PANTHER" id="PTHR38780:SF1">
    <property type="entry name" value="PROTEIN TUSC"/>
    <property type="match status" value="1"/>
</dbReference>
<dbReference type="Pfam" id="PF02635">
    <property type="entry name" value="DsrE"/>
    <property type="match status" value="1"/>
</dbReference>
<dbReference type="SUPFAM" id="SSF75169">
    <property type="entry name" value="DsrEFH-like"/>
    <property type="match status" value="1"/>
</dbReference>
<feature type="chain" id="PRO_1000122855" description="Protein TusC">
    <location>
        <begin position="1"/>
        <end position="121"/>
    </location>
</feature>
<gene>
    <name evidence="1" type="primary">tusC</name>
    <name type="ordered locus">YPK_0273</name>
</gene>
<accession>B1JIV1</accession>
<proteinExistence type="inferred from homology"/>
<protein>
    <recommendedName>
        <fullName evidence="1">Protein TusC</fullName>
    </recommendedName>
    <alternativeName>
        <fullName evidence="1">tRNA 2-thiouridine synthesizing protein C</fullName>
    </alternativeName>
</protein>
<organism>
    <name type="scientific">Yersinia pseudotuberculosis serotype O:3 (strain YPIII)</name>
    <dbReference type="NCBI Taxonomy" id="502800"/>
    <lineage>
        <taxon>Bacteria</taxon>
        <taxon>Pseudomonadati</taxon>
        <taxon>Pseudomonadota</taxon>
        <taxon>Gammaproteobacteria</taxon>
        <taxon>Enterobacterales</taxon>
        <taxon>Yersiniaceae</taxon>
        <taxon>Yersinia</taxon>
    </lineage>
</organism>
<evidence type="ECO:0000255" key="1">
    <source>
        <dbReference type="HAMAP-Rule" id="MF_00389"/>
    </source>
</evidence>
<sequence>MARKRIAFIFTQGPHGSSAGREGLDALLATSALSEDIGVFFISDGVLQLLPQQQPEKILARNYIATFGVLPLYDVENCYLCERSLQQRGLSKMADWILDVTVLSPADLRRELGTYDVVLTF</sequence>
<name>TUSC_YERPY</name>
<keyword id="KW-0963">Cytoplasm</keyword>
<keyword id="KW-0819">tRNA processing</keyword>
<reference key="1">
    <citation type="submission" date="2008-02" db="EMBL/GenBank/DDBJ databases">
        <title>Complete sequence of Yersinia pseudotuberculosis YPIII.</title>
        <authorList>
            <consortium name="US DOE Joint Genome Institute"/>
            <person name="Copeland A."/>
            <person name="Lucas S."/>
            <person name="Lapidus A."/>
            <person name="Glavina del Rio T."/>
            <person name="Dalin E."/>
            <person name="Tice H."/>
            <person name="Bruce D."/>
            <person name="Goodwin L."/>
            <person name="Pitluck S."/>
            <person name="Munk A.C."/>
            <person name="Brettin T."/>
            <person name="Detter J.C."/>
            <person name="Han C."/>
            <person name="Tapia R."/>
            <person name="Schmutz J."/>
            <person name="Larimer F."/>
            <person name="Land M."/>
            <person name="Hauser L."/>
            <person name="Challacombe J.F."/>
            <person name="Green L."/>
            <person name="Lindler L.E."/>
            <person name="Nikolich M.P."/>
            <person name="Richardson P."/>
        </authorList>
    </citation>
    <scope>NUCLEOTIDE SEQUENCE [LARGE SCALE GENOMIC DNA]</scope>
    <source>
        <strain>YPIII</strain>
    </source>
</reference>